<sequence>MPMGRFLSLVRGDSAESPREITSQSNIIGDTGSNGWLIRFFDSAFFCEWIAVSYLYKHPHAGVRDYLCNRMYTLPLSGIESYLFQICYMMVHKPSPSLDKFVIDICGKSLKIALKVHWFLLAELEDADDNEGISRIQEKCQIAATLMGEWSPLMRPQNEVSTPGSKNQVLNRLLSSKQKLFSLKLSPPTQKSLSFSPSPGTNVQDDGSQLPAEDNKIFKKLIPSPKVRDALMFRKSADKDDEESEKEGFFKRLLRDSKGEGDEPIPNSEGFFKRLLKDNKSEDEDITNSSEGFFKRLLSSKGESEELTSSSDGLFKRLLRDNKGDEEELGANSDSFFKRLLRESKNEDEESNPNSEGFFKKLFRDSKPEDDKVPKEVDDEDKDGFLKKLFREKNDDKRHGSEKNEANGTVYADKKSGEEDEREGFFKKFFKEKSDDKKDIVKVDDGNESEGDESPEFSLFKRLFRIHPEDAKPTSENENSSNGLVESSPGTENFFRKLFRDRDQSVEDSELFGSKKHKEKRPGSPKQRDDTPSGKPPLPNNTASQFRKGAYHESLEFVQALCETSYGLVDIFPIEDRKIGLRESLAEINFHLSEAEITGGICFPMGRGVFRVVHIPEDECILLNSREKAPYMISVEVLKAETPSAKESSNSQKLSKGGIPLANGDAFLQKPPPWAYPLWTTQEVYRNSADRMSLSTAQAIDQAMTPKSEVKVKLVNVSLSVEDRTSALESFGDPIDDVLGEAPRTGLNNDLEWVRVVVTADPGLRMESIPDPSVPRKKEHRRVPSTVAMEEVRAAAAKGEAPPGLPLKGAGQDSSDAQPRANGGMLKEGDALSGELWEGKRDRIRKASIYGKLPGWDLRSIIVKSGDDCRQEHLAVQLISHFYDIFQEAGLPLWLRPYEVLVTSSYTALIETIPDTASIHSIKSRYPNITSLRDFFVAKYKENSPSFKLAQRNFVESMAGYSLVCYLLQVKDRHNGNLLLDEEGHIIHIDFGFMLSNSPGGVNFESAPFKLTRELLEVMDSDADGVPSEFFDYFKVLCIQGFLTCRKHAERIILLVEMLQDSGFPCFKGGPRTIQNLRKRFHLSLTEEQCVSLVLSLISSSLDAWRTRQYDYYQRVLNGIL</sequence>
<keyword id="KW-1003">Cell membrane</keyword>
<keyword id="KW-0968">Cytoplasmic vesicle</keyword>
<keyword id="KW-0217">Developmental protein</keyword>
<keyword id="KW-0333">Golgi apparatus</keyword>
<keyword id="KW-0418">Kinase</keyword>
<keyword id="KW-0472">Membrane</keyword>
<keyword id="KW-0597">Phosphoprotein</keyword>
<keyword id="KW-1185">Reference proteome</keyword>
<keyword id="KW-0677">Repeat</keyword>
<keyword id="KW-0808">Transferase</keyword>
<feature type="chain" id="PRO_0000398594" description="Phosphatidylinositol 4-kinase beta 1">
    <location>
        <begin position="1"/>
        <end position="1121"/>
    </location>
</feature>
<feature type="domain" description="PIK helical" evidence="2">
    <location>
        <begin position="1"/>
        <end position="143"/>
    </location>
</feature>
<feature type="repeat" description="1" evidence="4">
    <location>
        <begin position="212"/>
        <end position="231"/>
    </location>
</feature>
<feature type="repeat" description="2" evidence="4">
    <location>
        <begin position="244"/>
        <end position="263"/>
    </location>
</feature>
<feature type="repeat" description="3" evidence="4">
    <location>
        <begin position="266"/>
        <end position="285"/>
    </location>
</feature>
<feature type="repeat" description="4" evidence="4">
    <location>
        <begin position="288"/>
        <end position="306"/>
    </location>
</feature>
<feature type="repeat" description="5" evidence="4">
    <location>
        <begin position="309"/>
        <end position="328"/>
    </location>
</feature>
<feature type="repeat" description="6" evidence="4">
    <location>
        <begin position="331"/>
        <end position="350"/>
    </location>
</feature>
<feature type="repeat" description="7" evidence="4">
    <location>
        <begin position="353"/>
        <end position="372"/>
    </location>
</feature>
<feature type="repeat" description="8" evidence="4">
    <location>
        <begin position="380"/>
        <end position="398"/>
    </location>
</feature>
<feature type="repeat" description="9" evidence="4">
    <location>
        <begin position="420"/>
        <end position="438"/>
    </location>
</feature>
<feature type="repeat" description="10" evidence="4">
    <location>
        <begin position="454"/>
        <end position="472"/>
    </location>
</feature>
<feature type="repeat" description="11" evidence="4">
    <location>
        <begin position="489"/>
        <end position="508"/>
    </location>
</feature>
<feature type="domain" description="PI3K/PI4K catalytic" evidence="1">
    <location>
        <begin position="835"/>
        <end position="1106"/>
    </location>
</feature>
<feature type="region of interest" description="Disordered" evidence="3">
    <location>
        <begin position="187"/>
        <end position="210"/>
    </location>
</feature>
<feature type="region of interest" description="11 X 20 AA approximate repeats (PPC)">
    <location>
        <begin position="212"/>
        <end position="508"/>
    </location>
</feature>
<feature type="region of interest" description="Disordered" evidence="3">
    <location>
        <begin position="343"/>
        <end position="421"/>
    </location>
</feature>
<feature type="region of interest" description="Disordered" evidence="3">
    <location>
        <begin position="435"/>
        <end position="489"/>
    </location>
</feature>
<feature type="region of interest" description="Disordered" evidence="3">
    <location>
        <begin position="506"/>
        <end position="544"/>
    </location>
</feature>
<feature type="region of interest" description="Disordered" evidence="3">
    <location>
        <begin position="794"/>
        <end position="825"/>
    </location>
</feature>
<feature type="region of interest" description="G-loop" evidence="1">
    <location>
        <begin position="841"/>
        <end position="847"/>
    </location>
</feature>
<feature type="region of interest" description="Catalytic loop" evidence="1">
    <location>
        <begin position="969"/>
        <end position="977"/>
    </location>
</feature>
<feature type="region of interest" description="Activation loop" evidence="1">
    <location>
        <begin position="988"/>
        <end position="1012"/>
    </location>
</feature>
<feature type="compositionally biased region" description="Polar residues" evidence="3">
    <location>
        <begin position="187"/>
        <end position="207"/>
    </location>
</feature>
<feature type="compositionally biased region" description="Basic and acidic residues" evidence="3">
    <location>
        <begin position="358"/>
        <end position="376"/>
    </location>
</feature>
<feature type="compositionally biased region" description="Basic and acidic residues" evidence="3">
    <location>
        <begin position="383"/>
        <end position="405"/>
    </location>
</feature>
<feature type="compositionally biased region" description="Basic and acidic residues" evidence="3">
    <location>
        <begin position="412"/>
        <end position="421"/>
    </location>
</feature>
<feature type="compositionally biased region" description="Basic and acidic residues" evidence="3">
    <location>
        <begin position="435"/>
        <end position="445"/>
    </location>
</feature>
<feature type="compositionally biased region" description="Acidic residues" evidence="3">
    <location>
        <begin position="446"/>
        <end position="455"/>
    </location>
</feature>
<feature type="compositionally biased region" description="Basic and acidic residues" evidence="3">
    <location>
        <begin position="466"/>
        <end position="475"/>
    </location>
</feature>
<feature type="compositionally biased region" description="Polar residues" evidence="3">
    <location>
        <begin position="476"/>
        <end position="489"/>
    </location>
</feature>
<feature type="modified residue" description="Phosphoserine" evidence="19 20">
    <location>
        <position position="449"/>
    </location>
</feature>
<feature type="modified residue" description="Phosphoserine" evidence="19">
    <location>
        <position position="454"/>
    </location>
</feature>
<feature type="mutagenesis site" description="Abolishes catalytic activity." evidence="11">
    <original>K</original>
    <variation>A</variation>
    <location>
        <position position="864"/>
    </location>
</feature>
<feature type="sequence conflict" description="In Ref. 1; CAB37928." evidence="16" ref="1">
    <original>VH</original>
    <variation>AS</variation>
    <location>
        <begin position="116"/>
        <end position="117"/>
    </location>
</feature>
<proteinExistence type="evidence at protein level"/>
<gene>
    <name evidence="14 15" type="primary">PI4KB1</name>
    <name type="synonym">PI4K</name>
    <name evidence="14 15" type="synonym">PI4KBETA1</name>
    <name evidence="17" type="ordered locus">At5g64070</name>
    <name evidence="18" type="ORF">MHJ24.5</name>
</gene>
<accession>Q9FMJ0</accession>
<accession>Q9ZPE1</accession>
<dbReference type="EC" id="2.7.1.67" evidence="4 5"/>
<dbReference type="EMBL" id="AJ002685">
    <property type="protein sequence ID" value="CAB37928.1"/>
    <property type="molecule type" value="Genomic_DNA"/>
</dbReference>
<dbReference type="EMBL" id="AB008266">
    <property type="protein sequence ID" value="BAB10275.1"/>
    <property type="molecule type" value="Genomic_DNA"/>
</dbReference>
<dbReference type="EMBL" id="CP002688">
    <property type="protein sequence ID" value="AED97836.1"/>
    <property type="molecule type" value="Genomic_DNA"/>
</dbReference>
<dbReference type="EMBL" id="AF462854">
    <property type="protein sequence ID" value="AAL58940.1"/>
    <property type="molecule type" value="mRNA"/>
</dbReference>
<dbReference type="EMBL" id="AY139795">
    <property type="protein sequence ID" value="AAM98101.1"/>
    <property type="molecule type" value="mRNA"/>
</dbReference>
<dbReference type="PIR" id="T52631">
    <property type="entry name" value="T52631"/>
</dbReference>
<dbReference type="RefSeq" id="NP_201212.1">
    <property type="nucleotide sequence ID" value="NM_125803.4"/>
</dbReference>
<dbReference type="SMR" id="Q9FMJ0"/>
<dbReference type="BioGRID" id="21770">
    <property type="interactions" value="5"/>
</dbReference>
<dbReference type="FunCoup" id="Q9FMJ0">
    <property type="interactions" value="4650"/>
</dbReference>
<dbReference type="IntAct" id="Q9FMJ0">
    <property type="interactions" value="1"/>
</dbReference>
<dbReference type="STRING" id="3702.Q9FMJ0"/>
<dbReference type="iPTMnet" id="Q9FMJ0"/>
<dbReference type="PaxDb" id="3702-AT5G64070.1"/>
<dbReference type="ProteomicsDB" id="250979"/>
<dbReference type="EnsemblPlants" id="AT5G64070.1">
    <property type="protein sequence ID" value="AT5G64070.1"/>
    <property type="gene ID" value="AT5G64070"/>
</dbReference>
<dbReference type="GeneID" id="836528"/>
<dbReference type="Gramene" id="AT5G64070.1">
    <property type="protein sequence ID" value="AT5G64070.1"/>
    <property type="gene ID" value="AT5G64070"/>
</dbReference>
<dbReference type="KEGG" id="ath:AT5G64070"/>
<dbReference type="Araport" id="AT5G64070"/>
<dbReference type="TAIR" id="AT5G64070">
    <property type="gene designation" value="PI-4KBETA1"/>
</dbReference>
<dbReference type="eggNOG" id="KOG0903">
    <property type="taxonomic scope" value="Eukaryota"/>
</dbReference>
<dbReference type="HOGENOM" id="CLU_002446_4_1_1"/>
<dbReference type="InParanoid" id="Q9FMJ0"/>
<dbReference type="OMA" id="AYPLWTV"/>
<dbReference type="PhylomeDB" id="Q9FMJ0"/>
<dbReference type="BioCyc" id="ARA:AT5G64070-MONOMER"/>
<dbReference type="PRO" id="PR:Q9FMJ0"/>
<dbReference type="Proteomes" id="UP000006548">
    <property type="component" value="Chromosome 5"/>
</dbReference>
<dbReference type="ExpressionAtlas" id="Q9FMJ0">
    <property type="expression patterns" value="baseline and differential"/>
</dbReference>
<dbReference type="GO" id="GO:0030659">
    <property type="term" value="C:cytoplasmic vesicle membrane"/>
    <property type="evidence" value="ECO:0000314"/>
    <property type="project" value="UniProtKB"/>
</dbReference>
<dbReference type="GO" id="GO:0005794">
    <property type="term" value="C:Golgi apparatus"/>
    <property type="evidence" value="ECO:0007669"/>
    <property type="project" value="UniProtKB-SubCell"/>
</dbReference>
<dbReference type="GO" id="GO:0016020">
    <property type="term" value="C:membrane"/>
    <property type="evidence" value="ECO:0000314"/>
    <property type="project" value="TAIR"/>
</dbReference>
<dbReference type="GO" id="GO:0005634">
    <property type="term" value="C:nucleus"/>
    <property type="evidence" value="ECO:0007005"/>
    <property type="project" value="TAIR"/>
</dbReference>
<dbReference type="GO" id="GO:0005886">
    <property type="term" value="C:plasma membrane"/>
    <property type="evidence" value="ECO:0000314"/>
    <property type="project" value="UniProtKB"/>
</dbReference>
<dbReference type="GO" id="GO:0035619">
    <property type="term" value="C:root hair tip"/>
    <property type="evidence" value="ECO:0000314"/>
    <property type="project" value="TAIR"/>
</dbReference>
<dbReference type="GO" id="GO:0004430">
    <property type="term" value="F:1-phosphatidylinositol 4-kinase activity"/>
    <property type="evidence" value="ECO:0000314"/>
    <property type="project" value="UniProtKB"/>
</dbReference>
<dbReference type="GO" id="GO:0043424">
    <property type="term" value="F:protein histidine kinase binding"/>
    <property type="evidence" value="ECO:0000353"/>
    <property type="project" value="UniProtKB"/>
</dbReference>
<dbReference type="GO" id="GO:0031267">
    <property type="term" value="F:small GTPase binding"/>
    <property type="evidence" value="ECO:0000353"/>
    <property type="project" value="UniProtKB"/>
</dbReference>
<dbReference type="GO" id="GO:0046854">
    <property type="term" value="P:phosphatidylinositol phosphate biosynthetic process"/>
    <property type="evidence" value="ECO:0007669"/>
    <property type="project" value="InterPro"/>
</dbReference>
<dbReference type="GO" id="GO:0009860">
    <property type="term" value="P:pollen tube growth"/>
    <property type="evidence" value="ECO:0000316"/>
    <property type="project" value="TAIR"/>
</dbReference>
<dbReference type="GO" id="GO:0048768">
    <property type="term" value="P:root hair cell tip growth"/>
    <property type="evidence" value="ECO:0000316"/>
    <property type="project" value="TAIR"/>
</dbReference>
<dbReference type="CDD" id="cd05168">
    <property type="entry name" value="PI4Kc_III_beta"/>
    <property type="match status" value="1"/>
</dbReference>
<dbReference type="FunFam" id="1.10.1070.11:FF:000019">
    <property type="entry name" value="Phosphatidylinositol 4-kinase beta 1"/>
    <property type="match status" value="1"/>
</dbReference>
<dbReference type="FunFam" id="3.30.1010.10:FF:000018">
    <property type="entry name" value="phosphatidylinositol 4-kinase beta 1"/>
    <property type="match status" value="1"/>
</dbReference>
<dbReference type="Gene3D" id="1.10.1070.11">
    <property type="entry name" value="Phosphatidylinositol 3-/4-kinase, catalytic domain"/>
    <property type="match status" value="1"/>
</dbReference>
<dbReference type="Gene3D" id="3.30.1010.10">
    <property type="entry name" value="Phosphatidylinositol 3-kinase Catalytic Subunit, Chain A, domain 4"/>
    <property type="match status" value="1"/>
</dbReference>
<dbReference type="InterPro" id="IPR016024">
    <property type="entry name" value="ARM-type_fold"/>
</dbReference>
<dbReference type="InterPro" id="IPR011009">
    <property type="entry name" value="Kinase-like_dom_sf"/>
</dbReference>
<dbReference type="InterPro" id="IPR000403">
    <property type="entry name" value="PI3/4_kinase_cat_dom"/>
</dbReference>
<dbReference type="InterPro" id="IPR036940">
    <property type="entry name" value="PI3/4_kinase_cat_sf"/>
</dbReference>
<dbReference type="InterPro" id="IPR018936">
    <property type="entry name" value="PI3/4_kinase_CS"/>
</dbReference>
<dbReference type="InterPro" id="IPR001263">
    <property type="entry name" value="PI3K_accessory_dom"/>
</dbReference>
<dbReference type="InterPro" id="IPR049160">
    <property type="entry name" value="PI4KB-PIK1_PIK"/>
</dbReference>
<dbReference type="InterPro" id="IPR015433">
    <property type="entry name" value="PI_Kinase"/>
</dbReference>
<dbReference type="PANTHER" id="PTHR10048:SF22">
    <property type="entry name" value="PHOSPHATIDYLINOSITOL 4-KINASE BETA"/>
    <property type="match status" value="1"/>
</dbReference>
<dbReference type="PANTHER" id="PTHR10048">
    <property type="entry name" value="PHOSPHATIDYLINOSITOL KINASE"/>
    <property type="match status" value="1"/>
</dbReference>
<dbReference type="Pfam" id="PF00454">
    <property type="entry name" value="PI3_PI4_kinase"/>
    <property type="match status" value="1"/>
</dbReference>
<dbReference type="Pfam" id="PF21245">
    <property type="entry name" value="PI4KB-PIK1_PIK"/>
    <property type="match status" value="1"/>
</dbReference>
<dbReference type="SMART" id="SM00146">
    <property type="entry name" value="PI3Kc"/>
    <property type="match status" value="1"/>
</dbReference>
<dbReference type="SUPFAM" id="SSF48371">
    <property type="entry name" value="ARM repeat"/>
    <property type="match status" value="1"/>
</dbReference>
<dbReference type="SUPFAM" id="SSF56112">
    <property type="entry name" value="Protein kinase-like (PK-like)"/>
    <property type="match status" value="1"/>
</dbReference>
<dbReference type="PROSITE" id="PS00915">
    <property type="entry name" value="PI3_4_KINASE_1"/>
    <property type="match status" value="1"/>
</dbReference>
<dbReference type="PROSITE" id="PS00916">
    <property type="entry name" value="PI3_4_KINASE_2"/>
    <property type="match status" value="1"/>
</dbReference>
<dbReference type="PROSITE" id="PS50290">
    <property type="entry name" value="PI3_4_KINASE_3"/>
    <property type="match status" value="1"/>
</dbReference>
<dbReference type="PROSITE" id="PS51545">
    <property type="entry name" value="PIK_HELICAL"/>
    <property type="match status" value="1"/>
</dbReference>
<evidence type="ECO:0000255" key="1">
    <source>
        <dbReference type="PROSITE-ProRule" id="PRU00269"/>
    </source>
</evidence>
<evidence type="ECO:0000255" key="2">
    <source>
        <dbReference type="PROSITE-ProRule" id="PRU00878"/>
    </source>
</evidence>
<evidence type="ECO:0000256" key="3">
    <source>
        <dbReference type="SAM" id="MobiDB-lite"/>
    </source>
</evidence>
<evidence type="ECO:0000269" key="4">
    <source>
    </source>
</evidence>
<evidence type="ECO:0000269" key="5">
    <source>
    </source>
</evidence>
<evidence type="ECO:0000269" key="6">
    <source>
    </source>
</evidence>
<evidence type="ECO:0000269" key="7">
    <source>
    </source>
</evidence>
<evidence type="ECO:0000269" key="8">
    <source>
    </source>
</evidence>
<evidence type="ECO:0000269" key="9">
    <source>
    </source>
</evidence>
<evidence type="ECO:0000269" key="10">
    <source>
    </source>
</evidence>
<evidence type="ECO:0000269" key="11">
    <source>
    </source>
</evidence>
<evidence type="ECO:0000269" key="12">
    <source>
    </source>
</evidence>
<evidence type="ECO:0000269" key="13">
    <source>
    </source>
</evidence>
<evidence type="ECO:0000303" key="14">
    <source>
    </source>
</evidence>
<evidence type="ECO:0000303" key="15">
    <source>
    </source>
</evidence>
<evidence type="ECO:0000305" key="16"/>
<evidence type="ECO:0000312" key="17">
    <source>
        <dbReference type="Araport" id="AT5G64070"/>
    </source>
</evidence>
<evidence type="ECO:0000312" key="18">
    <source>
        <dbReference type="EMBL" id="BAB10275.1"/>
    </source>
</evidence>
<evidence type="ECO:0007744" key="19">
    <source>
    </source>
</evidence>
<evidence type="ECO:0007744" key="20">
    <source>
    </source>
</evidence>
<protein>
    <recommendedName>
        <fullName evidence="14 15">Phosphatidylinositol 4-kinase beta 1</fullName>
        <shortName evidence="14 15">PI4-kinase beta 1</shortName>
        <shortName evidence="14 15">PtdIns-4-kinase beta 1</shortName>
        <ecNumber evidence="4 5">2.7.1.67</ecNumber>
    </recommendedName>
    <alternativeName>
        <fullName evidence="14 15">Phosphatidylinositol 4-OH kinase beta1</fullName>
        <shortName evidence="14 15">AtPI4Kbeta1</shortName>
        <shortName evidence="14 15">PI-4Kbeta1</shortName>
    </alternativeName>
</protein>
<organism>
    <name type="scientific">Arabidopsis thaliana</name>
    <name type="common">Mouse-ear cress</name>
    <dbReference type="NCBI Taxonomy" id="3702"/>
    <lineage>
        <taxon>Eukaryota</taxon>
        <taxon>Viridiplantae</taxon>
        <taxon>Streptophyta</taxon>
        <taxon>Embryophyta</taxon>
        <taxon>Tracheophyta</taxon>
        <taxon>Spermatophyta</taxon>
        <taxon>Magnoliopsida</taxon>
        <taxon>eudicotyledons</taxon>
        <taxon>Gunneridae</taxon>
        <taxon>Pentapetalae</taxon>
        <taxon>rosids</taxon>
        <taxon>malvids</taxon>
        <taxon>Brassicales</taxon>
        <taxon>Brassicaceae</taxon>
        <taxon>Camelineae</taxon>
        <taxon>Arabidopsis</taxon>
    </lineage>
</organism>
<reference key="1">
    <citation type="journal article" date="1999" name="J. Biol. Chem.">
        <title>A plant 126-kDa phosphatidylinositol 4-kinase with a novel repeat structure. Cloning and functional expression in baculovirus-infected insect cells.</title>
        <authorList>
            <person name="Xue H.-W."/>
            <person name="Pical C."/>
            <person name="Brearley C."/>
            <person name="Elge S."/>
            <person name="Mueller-Roeber B."/>
        </authorList>
    </citation>
    <scope>NUCLEOTIDE SEQUENCE [GENOMIC DNA]</scope>
    <scope>FUNCTION</scope>
    <scope>CATALYTIC ACTIVITY</scope>
    <scope>REPEATS</scope>
    <scope>ACTIVITY REGULATION</scope>
    <scope>TISSUE SPECIFICITY</scope>
    <source>
        <strain>cv. C24</strain>
        <tissue>Hypocotyl</tissue>
    </source>
</reference>
<reference key="2">
    <citation type="journal article" date="1997" name="DNA Res.">
        <title>Structural analysis of Arabidopsis thaliana chromosome 5. III. Sequence features of the regions of 1,191,918 bp covered by seventeen physically assigned P1 clones.</title>
        <authorList>
            <person name="Nakamura Y."/>
            <person name="Sato S."/>
            <person name="Kaneko T."/>
            <person name="Kotani H."/>
            <person name="Asamizu E."/>
            <person name="Miyajima N."/>
            <person name="Tabata S."/>
        </authorList>
    </citation>
    <scope>NUCLEOTIDE SEQUENCE [LARGE SCALE GENOMIC DNA]</scope>
    <source>
        <strain>cv. Columbia</strain>
    </source>
</reference>
<reference key="3">
    <citation type="journal article" date="2017" name="Plant J.">
        <title>Araport11: a complete reannotation of the Arabidopsis thaliana reference genome.</title>
        <authorList>
            <person name="Cheng C.Y."/>
            <person name="Krishnakumar V."/>
            <person name="Chan A.P."/>
            <person name="Thibaud-Nissen F."/>
            <person name="Schobel S."/>
            <person name="Town C.D."/>
        </authorList>
    </citation>
    <scope>GENOME REANNOTATION</scope>
    <source>
        <strain>cv. Columbia</strain>
    </source>
</reference>
<reference key="4">
    <citation type="journal article" date="2003" name="Science">
        <title>Empirical analysis of transcriptional activity in the Arabidopsis genome.</title>
        <authorList>
            <person name="Yamada K."/>
            <person name="Lim J."/>
            <person name="Dale J.M."/>
            <person name="Chen H."/>
            <person name="Shinn P."/>
            <person name="Palm C.J."/>
            <person name="Southwick A.M."/>
            <person name="Wu H.C."/>
            <person name="Kim C.J."/>
            <person name="Nguyen M."/>
            <person name="Pham P.K."/>
            <person name="Cheuk R.F."/>
            <person name="Karlin-Newmann G."/>
            <person name="Liu S.X."/>
            <person name="Lam B."/>
            <person name="Sakano H."/>
            <person name="Wu T."/>
            <person name="Yu G."/>
            <person name="Miranda M."/>
            <person name="Quach H.L."/>
            <person name="Tripp M."/>
            <person name="Chang C.H."/>
            <person name="Lee J.M."/>
            <person name="Toriumi M.J."/>
            <person name="Chan M.M."/>
            <person name="Tang C.C."/>
            <person name="Onodera C.S."/>
            <person name="Deng J.M."/>
            <person name="Akiyama K."/>
            <person name="Ansari Y."/>
            <person name="Arakawa T."/>
            <person name="Banh J."/>
            <person name="Banno F."/>
            <person name="Bowser L."/>
            <person name="Brooks S.Y."/>
            <person name="Carninci P."/>
            <person name="Chao Q."/>
            <person name="Choy N."/>
            <person name="Enju A."/>
            <person name="Goldsmith A.D."/>
            <person name="Gurjal M."/>
            <person name="Hansen N.F."/>
            <person name="Hayashizaki Y."/>
            <person name="Johnson-Hopson C."/>
            <person name="Hsuan V.W."/>
            <person name="Iida K."/>
            <person name="Karnes M."/>
            <person name="Khan S."/>
            <person name="Koesema E."/>
            <person name="Ishida J."/>
            <person name="Jiang P.X."/>
            <person name="Jones T."/>
            <person name="Kawai J."/>
            <person name="Kamiya A."/>
            <person name="Meyers C."/>
            <person name="Nakajima M."/>
            <person name="Narusaka M."/>
            <person name="Seki M."/>
            <person name="Sakurai T."/>
            <person name="Satou M."/>
            <person name="Tamse R."/>
            <person name="Vaysberg M."/>
            <person name="Wallender E.K."/>
            <person name="Wong C."/>
            <person name="Yamamura Y."/>
            <person name="Yuan S."/>
            <person name="Shinozaki K."/>
            <person name="Davis R.W."/>
            <person name="Theologis A."/>
            <person name="Ecker J.R."/>
        </authorList>
    </citation>
    <scope>NUCLEOTIDE SEQUENCE [LARGE SCALE MRNA]</scope>
    <source>
        <strain>cv. Columbia</strain>
    </source>
</reference>
<reference key="5">
    <citation type="journal article" date="2002" name="Plant Physiol.">
        <title>Inositol phospholipid metabolism in Arabidopsis. Characterized and putative isoforms of inositol phospholipid kinase and phosphoinositide-specific phospholipase C.</title>
        <authorList>
            <person name="Mueller-Roeber B."/>
            <person name="Pical C."/>
        </authorList>
    </citation>
    <scope>GENE FAMILY</scope>
    <scope>NOMENCLATURE</scope>
</reference>
<reference key="6">
    <citation type="journal article" date="2003" name="Plant Physiol.">
        <title>Differential regulation of two Arabidopsis type III phosphatidylinositol 4-kinase isoforms. A regulatory role for the pleckstrin homology domain.</title>
        <authorList>
            <person name="Stevenson-Paulik J."/>
            <person name="Love J."/>
            <person name="Boss W.F."/>
        </authorList>
    </citation>
    <scope>ACTIVITY REGULATION</scope>
    <scope>CATALYTIC ACTIVITY</scope>
    <scope>SUBCELLULAR LOCATION</scope>
</reference>
<reference key="7">
    <citation type="journal article" date="2006" name="J. Cell Biol.">
        <title>A role for the RabA4b effector protein PI-4Kbeta1 in polarized expansion of root hair cells in Arabidopsis thaliana.</title>
        <authorList>
            <person name="Preuss M.L."/>
            <person name="Schmitz A.J."/>
            <person name="Thole J.M."/>
            <person name="Bonner H.K.S."/>
            <person name="Otegui M.S."/>
            <person name="Nielsen E."/>
        </authorList>
    </citation>
    <scope>INTERACTION WITH RABA4B AND CBL1</scope>
    <scope>FUNCTION</scope>
    <scope>DISRUPTION PHENOTYPE</scope>
    <scope>SUBCELLULAR LOCATION</scope>
</reference>
<reference key="8">
    <citation type="journal article" date="2006" name="Plant Mol. Biol.">
        <title>The highly charged region of plant beta-type phosphatidylinositol 4-kinase is involved in membrane targeting and phospholipid binding.</title>
        <authorList>
            <person name="Lou Y."/>
            <person name="Ma H."/>
            <person name="Lin W.H."/>
            <person name="Chu Z.Q."/>
            <person name="Mueller-Roeber B."/>
            <person name="Xu Z.H."/>
            <person name="Xue H.W."/>
        </authorList>
    </citation>
    <scope>SUBCELLULAR LOCATION</scope>
</reference>
<reference key="9">
    <citation type="journal article" date="2008" name="J. Proteome Res.">
        <title>Site-specific phosphorylation profiling of Arabidopsis proteins by mass spectrometry and peptide chip analysis.</title>
        <authorList>
            <person name="de la Fuente van Bentem S."/>
            <person name="Anrather D."/>
            <person name="Dohnal I."/>
            <person name="Roitinger E."/>
            <person name="Csaszar E."/>
            <person name="Joore J."/>
            <person name="Buijnink J."/>
            <person name="Carreri A."/>
            <person name="Forzani C."/>
            <person name="Lorkovic Z.J."/>
            <person name="Barta A."/>
            <person name="Lecourieux D."/>
            <person name="Verhounig A."/>
            <person name="Jonak C."/>
            <person name="Hirt H."/>
        </authorList>
    </citation>
    <scope>SUBCELLULAR LOCATION</scope>
    <scope>PHOSPHORYLATION [LARGE SCALE ANALYSIS] AT SER-449 AND SER-454</scope>
    <scope>IDENTIFICATION BY MASS SPECTROMETRY [LARGE SCALE ANALYSIS]</scope>
    <source>
        <tissue>Root</tissue>
    </source>
</reference>
<reference key="10">
    <citation type="journal article" date="2008" name="J. Proteome Res.">
        <title>Toward an interaction map of the two-component signaling pathway of Arabidopsis thaliana.</title>
        <authorList>
            <person name="Dortay H."/>
            <person name="Gruhn N."/>
            <person name="Pfeifer A."/>
            <person name="Schwerdtner M."/>
            <person name="Schmuelling T."/>
            <person name="Heyl A."/>
        </authorList>
    </citation>
    <scope>INTERACTION WITH AHK2</scope>
</reference>
<reference key="11">
    <citation type="journal article" date="2009" name="Plant Cell">
        <title>The Rab GTPase RabA4d regulates pollen tube tip growth in Arabidopsis thaliana.</title>
        <authorList>
            <person name="Szumlanski A.L."/>
            <person name="Nielsen E."/>
        </authorList>
    </citation>
    <scope>INTERACTION WITH RABA4D</scope>
    <scope>FUNCTION</scope>
    <scope>DISRUPTION PHENOTYPE</scope>
</reference>
<reference key="12">
    <citation type="journal article" date="2009" name="Plant Physiol.">
        <title>Large-scale Arabidopsis phosphoproteome profiling reveals novel chloroplast kinase substrates and phosphorylation networks.</title>
        <authorList>
            <person name="Reiland S."/>
            <person name="Messerli G."/>
            <person name="Baerenfaller K."/>
            <person name="Gerrits B."/>
            <person name="Endler A."/>
            <person name="Grossmann J."/>
            <person name="Gruissem W."/>
            <person name="Baginsky S."/>
        </authorList>
    </citation>
    <scope>PHOSPHORYLATION [LARGE SCALE ANALYSIS] AT SER-449</scope>
    <scope>IDENTIFICATION BY MASS SPECTROMETRY [LARGE SCALE ANALYSIS]</scope>
</reference>
<reference key="13">
    <citation type="journal article" date="2010" name="Mol. Plant">
        <title>Functional cooperativity of enzymes of phosphoinositide conversion according to synergistic effects on pectin secretion in tobacco pollen tubes.</title>
        <authorList>
            <person name="Ischebeck T."/>
            <person name="Vu L.H."/>
            <person name="Jin X."/>
            <person name="Stenzel I."/>
            <person name="Loefke C."/>
            <person name="Heilmann I."/>
        </authorList>
    </citation>
    <scope>FUNCTION</scope>
    <scope>MUTAGENESIS OF LYS-864</scope>
</reference>
<reference key="14">
    <citation type="journal article" date="2011" name="Traffic">
        <title>Electron tomography of RabA4b- and PI-4Kbeta1-labeled trans Golgi network compartments in Arabidopsis.</title>
        <authorList>
            <person name="Kang B.H."/>
            <person name="Nielsen E."/>
            <person name="Preuss M.L."/>
            <person name="Mastronarde D."/>
            <person name="Staehelin L.A."/>
        </authorList>
    </citation>
    <scope>FUNCTION</scope>
    <scope>SUBCELLULAR LOCATION</scope>
</reference>
<reference key="15">
    <citation type="journal article" date="2012" name="Plant Cell Physiol.">
        <title>Arabidopsis type-III phosphatidylinositol 4-kinases beta1 and beta2 are upstream of the phospholipase C pathway triggered by cold exposure.</title>
        <authorList>
            <person name="Delage E."/>
            <person name="Ruelland E."/>
            <person name="Guillas I."/>
            <person name="Zachowski A."/>
            <person name="Puyaubert J."/>
        </authorList>
    </citation>
    <scope>FUNCTION</scope>
</reference>
<reference key="16">
    <citation type="journal article" date="2012" name="Plant Signal. Behav.">
        <title>Eat in or take away? How phosphatidylinositol 4-kinases feed the phospholipase C pathway with substrate.</title>
        <authorList>
            <person name="Delage E."/>
            <person name="Ruelland E."/>
            <person name="Zachowski A."/>
            <person name="Puyaubert J."/>
        </authorList>
    </citation>
    <scope>REVIEW</scope>
</reference>
<name>P4KB1_ARATH</name>
<comment type="function">
    <text evidence="4 6 10 11 12 13">Acts on phosphatidylinositol (PtdIns) in the first committed step in the production of the second messenger inositol-1,4,5-trisphosphate. Necessary for proper organization of the trans-Golgi network (TGN) and post-Golgi secretion in root hairs. Together with PI4KB2, required during polarized root hair expansion and pollen tube elongation. Functions redundantly with PI4KB2 upstream of the cold response phosphoinositide-dependent phospholipase C (PI-PLC) pathway.</text>
</comment>
<comment type="catalytic activity">
    <reaction evidence="4 5">
        <text>a 1,2-diacyl-sn-glycero-3-phospho-(1D-myo-inositol) + ATP = a 1,2-diacyl-sn-glycero-3-phospho-(1D-myo-inositol 4-phosphate) + ADP + H(+)</text>
        <dbReference type="Rhea" id="RHEA:19877"/>
        <dbReference type="ChEBI" id="CHEBI:15378"/>
        <dbReference type="ChEBI" id="CHEBI:30616"/>
        <dbReference type="ChEBI" id="CHEBI:57880"/>
        <dbReference type="ChEBI" id="CHEBI:58178"/>
        <dbReference type="ChEBI" id="CHEBI:456216"/>
        <dbReference type="EC" id="2.7.1.67"/>
    </reaction>
</comment>
<comment type="activity regulation">
    <text evidence="4 5">Stimulated by phosphatidylinositol 4-phosphate (PtdIns4P). Slightly repressed by phosphatidyl-choline (PtdCho), wortmannin and adenosine.</text>
</comment>
<comment type="subunit">
    <text evidence="6 9 10">Interacts with AHK2, CBL1 and RABA4D.</text>
</comment>
<comment type="interaction">
    <interactant intactId="EBI-1807432">
        <id>Q9FMJ0</id>
    </interactant>
    <interactant intactId="EBI-1100634">
        <id>Q9C5U2</id>
        <label>AHK2</label>
    </interactant>
    <organismsDiffer>false</organismsDiffer>
    <experiments>2</experiments>
</comment>
<comment type="subcellular location">
    <subcellularLocation>
        <location evidence="7 12">Cell membrane</location>
    </subcellularLocation>
    <subcellularLocation>
        <location evidence="6 12">Golgi apparatus</location>
        <location evidence="6 12">trans-Golgi network</location>
    </subcellularLocation>
    <subcellularLocation>
        <location evidence="5">Cytoplasmic vesicle membrane</location>
        <topology evidence="5">Peripheral membrane protein</topology>
        <orientation evidence="5 8">Cytoplasmic side</orientation>
    </subcellularLocation>
    <text evidence="6">Associated to tip-localized membranes in growing root hairs.</text>
</comment>
<comment type="tissue specificity">
    <text evidence="4">Expressed constitutively in leaves, roots, flowers, and stems.</text>
</comment>
<comment type="domain">
    <text evidence="7">The PPC (Plant PI4K Charged) region is involved in membrane targeting and phospholipid binding.</text>
</comment>
<comment type="disruption phenotype">
    <text evidence="6 10">When associated with PI4KB2 disruption: aberrant root hair morphologies, and short and wavy pollen tubes.</text>
</comment>
<comment type="similarity">
    <text evidence="16">Belongs to the PI3/PI4-kinase family. Type III PI4K subfamily.</text>
</comment>